<keyword id="KW-0001">2Fe-2S</keyword>
<keyword id="KW-0004">4Fe-4S</keyword>
<keyword id="KW-0093">Biotin biosynthesis</keyword>
<keyword id="KW-0408">Iron</keyword>
<keyword id="KW-0411">Iron-sulfur</keyword>
<keyword id="KW-0479">Metal-binding</keyword>
<keyword id="KW-0949">S-adenosyl-L-methionine</keyword>
<keyword id="KW-0808">Transferase</keyword>
<name>BIOB_SALCH</name>
<dbReference type="EC" id="2.8.1.6" evidence="1"/>
<dbReference type="EMBL" id="AE017220">
    <property type="protein sequence ID" value="AAX64698.1"/>
    <property type="molecule type" value="Genomic_DNA"/>
</dbReference>
<dbReference type="RefSeq" id="WP_001539539.1">
    <property type="nucleotide sequence ID" value="NC_006905.1"/>
</dbReference>
<dbReference type="SMR" id="Q57RG3"/>
<dbReference type="KEGG" id="sec:SCH_0792"/>
<dbReference type="HOGENOM" id="CLU_033172_1_2_6"/>
<dbReference type="UniPathway" id="UPA00078">
    <property type="reaction ID" value="UER00162"/>
</dbReference>
<dbReference type="Proteomes" id="UP000000538">
    <property type="component" value="Chromosome"/>
</dbReference>
<dbReference type="GO" id="GO:0051537">
    <property type="term" value="F:2 iron, 2 sulfur cluster binding"/>
    <property type="evidence" value="ECO:0007669"/>
    <property type="project" value="UniProtKB-KW"/>
</dbReference>
<dbReference type="GO" id="GO:0051539">
    <property type="term" value="F:4 iron, 4 sulfur cluster binding"/>
    <property type="evidence" value="ECO:0007669"/>
    <property type="project" value="UniProtKB-KW"/>
</dbReference>
<dbReference type="GO" id="GO:0004076">
    <property type="term" value="F:biotin synthase activity"/>
    <property type="evidence" value="ECO:0007669"/>
    <property type="project" value="UniProtKB-UniRule"/>
</dbReference>
<dbReference type="GO" id="GO:0005506">
    <property type="term" value="F:iron ion binding"/>
    <property type="evidence" value="ECO:0007669"/>
    <property type="project" value="UniProtKB-UniRule"/>
</dbReference>
<dbReference type="GO" id="GO:0009102">
    <property type="term" value="P:biotin biosynthetic process"/>
    <property type="evidence" value="ECO:0007669"/>
    <property type="project" value="UniProtKB-UniRule"/>
</dbReference>
<dbReference type="CDD" id="cd01335">
    <property type="entry name" value="Radical_SAM"/>
    <property type="match status" value="1"/>
</dbReference>
<dbReference type="FunFam" id="3.20.20.70:FF:000011">
    <property type="entry name" value="Biotin synthase"/>
    <property type="match status" value="1"/>
</dbReference>
<dbReference type="Gene3D" id="3.20.20.70">
    <property type="entry name" value="Aldolase class I"/>
    <property type="match status" value="1"/>
</dbReference>
<dbReference type="HAMAP" id="MF_01694">
    <property type="entry name" value="BioB"/>
    <property type="match status" value="1"/>
</dbReference>
<dbReference type="InterPro" id="IPR013785">
    <property type="entry name" value="Aldolase_TIM"/>
</dbReference>
<dbReference type="InterPro" id="IPR010722">
    <property type="entry name" value="BATS_dom"/>
</dbReference>
<dbReference type="InterPro" id="IPR002684">
    <property type="entry name" value="Biotin_synth/BioAB"/>
</dbReference>
<dbReference type="InterPro" id="IPR024177">
    <property type="entry name" value="Biotin_synthase"/>
</dbReference>
<dbReference type="InterPro" id="IPR006638">
    <property type="entry name" value="Elp3/MiaA/NifB-like_rSAM"/>
</dbReference>
<dbReference type="InterPro" id="IPR007197">
    <property type="entry name" value="rSAM"/>
</dbReference>
<dbReference type="NCBIfam" id="TIGR00433">
    <property type="entry name" value="bioB"/>
    <property type="match status" value="1"/>
</dbReference>
<dbReference type="PANTHER" id="PTHR22976">
    <property type="entry name" value="BIOTIN SYNTHASE"/>
    <property type="match status" value="1"/>
</dbReference>
<dbReference type="PANTHER" id="PTHR22976:SF2">
    <property type="entry name" value="BIOTIN SYNTHASE, MITOCHONDRIAL"/>
    <property type="match status" value="1"/>
</dbReference>
<dbReference type="Pfam" id="PF06968">
    <property type="entry name" value="BATS"/>
    <property type="match status" value="1"/>
</dbReference>
<dbReference type="Pfam" id="PF04055">
    <property type="entry name" value="Radical_SAM"/>
    <property type="match status" value="1"/>
</dbReference>
<dbReference type="PIRSF" id="PIRSF001619">
    <property type="entry name" value="Biotin_synth"/>
    <property type="match status" value="1"/>
</dbReference>
<dbReference type="SFLD" id="SFLDF00272">
    <property type="entry name" value="biotin_synthase"/>
    <property type="match status" value="1"/>
</dbReference>
<dbReference type="SFLD" id="SFLDG01278">
    <property type="entry name" value="biotin_synthase_like"/>
    <property type="match status" value="1"/>
</dbReference>
<dbReference type="SMART" id="SM00876">
    <property type="entry name" value="BATS"/>
    <property type="match status" value="1"/>
</dbReference>
<dbReference type="SMART" id="SM00729">
    <property type="entry name" value="Elp3"/>
    <property type="match status" value="1"/>
</dbReference>
<dbReference type="SUPFAM" id="SSF102114">
    <property type="entry name" value="Radical SAM enzymes"/>
    <property type="match status" value="1"/>
</dbReference>
<dbReference type="PROSITE" id="PS51918">
    <property type="entry name" value="RADICAL_SAM"/>
    <property type="match status" value="1"/>
</dbReference>
<feature type="chain" id="PRO_0000381597" description="Biotin synthase">
    <location>
        <begin position="1"/>
        <end position="346"/>
    </location>
</feature>
<feature type="domain" description="Radical SAM core" evidence="2">
    <location>
        <begin position="38"/>
        <end position="256"/>
    </location>
</feature>
<feature type="binding site" evidence="1">
    <location>
        <position position="53"/>
    </location>
    <ligand>
        <name>[4Fe-4S] cluster</name>
        <dbReference type="ChEBI" id="CHEBI:49883"/>
        <note>4Fe-4S-S-AdoMet</note>
    </ligand>
</feature>
<feature type="binding site" evidence="1">
    <location>
        <position position="57"/>
    </location>
    <ligand>
        <name>[4Fe-4S] cluster</name>
        <dbReference type="ChEBI" id="CHEBI:49883"/>
        <note>4Fe-4S-S-AdoMet</note>
    </ligand>
</feature>
<feature type="binding site" evidence="1">
    <location>
        <position position="60"/>
    </location>
    <ligand>
        <name>[4Fe-4S] cluster</name>
        <dbReference type="ChEBI" id="CHEBI:49883"/>
        <note>4Fe-4S-S-AdoMet</note>
    </ligand>
</feature>
<feature type="binding site" evidence="1">
    <location>
        <position position="97"/>
    </location>
    <ligand>
        <name>[2Fe-2S] cluster</name>
        <dbReference type="ChEBI" id="CHEBI:190135"/>
    </ligand>
</feature>
<feature type="binding site" evidence="1">
    <location>
        <position position="128"/>
    </location>
    <ligand>
        <name>[2Fe-2S] cluster</name>
        <dbReference type="ChEBI" id="CHEBI:190135"/>
    </ligand>
</feature>
<feature type="binding site" evidence="1">
    <location>
        <position position="188"/>
    </location>
    <ligand>
        <name>[2Fe-2S] cluster</name>
        <dbReference type="ChEBI" id="CHEBI:190135"/>
    </ligand>
</feature>
<feature type="binding site" evidence="1">
    <location>
        <position position="260"/>
    </location>
    <ligand>
        <name>[2Fe-2S] cluster</name>
        <dbReference type="ChEBI" id="CHEBI:190135"/>
    </ligand>
</feature>
<comment type="function">
    <text evidence="1">Catalyzes the conversion of dethiobiotin (DTB) to biotin by the insertion of a sulfur atom into dethiobiotin via a radical-based mechanism.</text>
</comment>
<comment type="catalytic activity">
    <reaction evidence="1">
        <text>(4R,5S)-dethiobiotin + (sulfur carrier)-SH + 2 reduced [2Fe-2S]-[ferredoxin] + 2 S-adenosyl-L-methionine = (sulfur carrier)-H + biotin + 2 5'-deoxyadenosine + 2 L-methionine + 2 oxidized [2Fe-2S]-[ferredoxin]</text>
        <dbReference type="Rhea" id="RHEA:22060"/>
        <dbReference type="Rhea" id="RHEA-COMP:10000"/>
        <dbReference type="Rhea" id="RHEA-COMP:10001"/>
        <dbReference type="Rhea" id="RHEA-COMP:14737"/>
        <dbReference type="Rhea" id="RHEA-COMP:14739"/>
        <dbReference type="ChEBI" id="CHEBI:17319"/>
        <dbReference type="ChEBI" id="CHEBI:29917"/>
        <dbReference type="ChEBI" id="CHEBI:33737"/>
        <dbReference type="ChEBI" id="CHEBI:33738"/>
        <dbReference type="ChEBI" id="CHEBI:57586"/>
        <dbReference type="ChEBI" id="CHEBI:57844"/>
        <dbReference type="ChEBI" id="CHEBI:59789"/>
        <dbReference type="ChEBI" id="CHEBI:64428"/>
        <dbReference type="ChEBI" id="CHEBI:149473"/>
        <dbReference type="EC" id="2.8.1.6"/>
    </reaction>
</comment>
<comment type="cofactor">
    <cofactor evidence="1">
        <name>[4Fe-4S] cluster</name>
        <dbReference type="ChEBI" id="CHEBI:49883"/>
    </cofactor>
    <text evidence="1">Binds 1 [4Fe-4S] cluster. The cluster is coordinated with 3 cysteines and an exchangeable S-adenosyl-L-methionine.</text>
</comment>
<comment type="cofactor">
    <cofactor evidence="1">
        <name>[2Fe-2S] cluster</name>
        <dbReference type="ChEBI" id="CHEBI:190135"/>
    </cofactor>
    <text evidence="1">Binds 1 [2Fe-2S] cluster. The cluster is coordinated with 3 cysteines and 1 arginine.</text>
</comment>
<comment type="pathway">
    <text evidence="1">Cofactor biosynthesis; biotin biosynthesis; biotin from 7,8-diaminononanoate: step 2/2.</text>
</comment>
<comment type="subunit">
    <text evidence="1">Homodimer.</text>
</comment>
<comment type="similarity">
    <text evidence="1">Belongs to the radical SAM superfamily. Biotin synthase family.</text>
</comment>
<protein>
    <recommendedName>
        <fullName evidence="1">Biotin synthase</fullName>
        <ecNumber evidence="1">2.8.1.6</ecNumber>
    </recommendedName>
</protein>
<proteinExistence type="inferred from homology"/>
<reference key="1">
    <citation type="journal article" date="2005" name="Nucleic Acids Res.">
        <title>The genome sequence of Salmonella enterica serovar Choleraesuis, a highly invasive and resistant zoonotic pathogen.</title>
        <authorList>
            <person name="Chiu C.-H."/>
            <person name="Tang P."/>
            <person name="Chu C."/>
            <person name="Hu S."/>
            <person name="Bao Q."/>
            <person name="Yu J."/>
            <person name="Chou Y.-Y."/>
            <person name="Wang H.-S."/>
            <person name="Lee Y.-S."/>
        </authorList>
    </citation>
    <scope>NUCLEOTIDE SEQUENCE [LARGE SCALE GENOMIC DNA]</scope>
    <source>
        <strain>SC-B67</strain>
    </source>
</reference>
<gene>
    <name evidence="1" type="primary">bioB</name>
    <name type="ordered locus">SCH_0792</name>
</gene>
<sequence>MARHPRWTLSQVTELFGKPLLELLFEAQQIHRQHFDPQQVQVSTLLSIKTGACPEDCKYCPQSSRYKTGLEAERLMEVEQVLDSARKAKNAGSTRFCMGAAWRNPHERDMPYLEKIVQGVKAMGLETCMTLGMLNESQAQRLANAGLDYYNHNLDTSPEFYGNIITTRTYQERLDTLEKVREAGIKVCSGGIVGLGETVTDRAGLLLQLANLPTPPESVPINMLVKVKGTPLADNDDVDAFDFIRTIAVARIMMPTSYVRLSAGREQMNEQTQAMCFMAGANSIFYGCKLLTTPNPAEDKDLQLFRKLGLNPQQTRVLAGDNEQQQRLEQTLMTPDTDDYYNAAAL</sequence>
<organism>
    <name type="scientific">Salmonella choleraesuis (strain SC-B67)</name>
    <dbReference type="NCBI Taxonomy" id="321314"/>
    <lineage>
        <taxon>Bacteria</taxon>
        <taxon>Pseudomonadati</taxon>
        <taxon>Pseudomonadota</taxon>
        <taxon>Gammaproteobacteria</taxon>
        <taxon>Enterobacterales</taxon>
        <taxon>Enterobacteriaceae</taxon>
        <taxon>Salmonella</taxon>
    </lineage>
</organism>
<evidence type="ECO:0000255" key="1">
    <source>
        <dbReference type="HAMAP-Rule" id="MF_01694"/>
    </source>
</evidence>
<evidence type="ECO:0000255" key="2">
    <source>
        <dbReference type="PROSITE-ProRule" id="PRU01266"/>
    </source>
</evidence>
<accession>Q57RG3</accession>